<accession>Q9NRJ1</accession>
<gene>
    <name type="primary">C8orf17</name>
</gene>
<comment type="function">
    <text evidence="1">May be involved in cell survival, proliferation and progression of cancer cells.</text>
</comment>
<comment type="subunit">
    <text evidence="2">Interacts with TSPO, IGHM and IGHD.</text>
</comment>
<comment type="subcellular location">
    <subcellularLocation>
        <location evidence="2">Cytoplasm</location>
    </subcellularLocation>
    <subcellularLocation>
        <location evidence="2">Microsome membrane</location>
    </subcellularLocation>
    <subcellularLocation>
        <location evidence="2">Endoplasmic reticulum membrane</location>
    </subcellularLocation>
</comment>
<comment type="tissue specificity">
    <text evidence="1">Expressed in the heart, kidney, liver, pancreas, small intestine, ovary, testis, prostate and thymus. Expressed in all of the cancer cell lines tested.</text>
</comment>
<comment type="caution">
    <text evidence="3">Encoded in an intron of the TRAPPC9 gene.</text>
</comment>
<proteinExistence type="evidence at protein level"/>
<evidence type="ECO:0000269" key="1">
    <source>
    </source>
</evidence>
<evidence type="ECO:0000269" key="2">
    <source>
    </source>
</evidence>
<evidence type="ECO:0000305" key="3"/>
<name>MOST1_HUMAN</name>
<sequence>MGECPHLVDVRLGHRSLATGPEQSDICHTGSEARWTTTWYGSLSFSRHKYKMLADLTPGVEMSCRHWARWLTPVIPALWKAEAGGLPELRSSRPAWTTW</sequence>
<organism>
    <name type="scientific">Homo sapiens</name>
    <name type="common">Human</name>
    <dbReference type="NCBI Taxonomy" id="9606"/>
    <lineage>
        <taxon>Eukaryota</taxon>
        <taxon>Metazoa</taxon>
        <taxon>Chordata</taxon>
        <taxon>Craniata</taxon>
        <taxon>Vertebrata</taxon>
        <taxon>Euteleostomi</taxon>
        <taxon>Mammalia</taxon>
        <taxon>Eutheria</taxon>
        <taxon>Euarchontoglires</taxon>
        <taxon>Primates</taxon>
        <taxon>Haplorrhini</taxon>
        <taxon>Catarrhini</taxon>
        <taxon>Hominidae</taxon>
        <taxon>Homo</taxon>
    </lineage>
</organism>
<reference key="1">
    <citation type="journal article" date="2003" name="Mol. Pathol.">
        <title>The novel human MOST-1 (C8orf17) gene exhibits tissue specific expression, maps to chromosome 8q24.2, and is overexpressed/amplified in high grade cancers of the breast and prostate.</title>
        <authorList>
            <person name="Tan J.M.M."/>
            <person name="Tock E.P.C."/>
            <person name="Chow V.T.K."/>
        </authorList>
    </citation>
    <scope>NUCLEOTIDE SEQUENCE [MRNA]</scope>
    <scope>FUNCTION</scope>
    <scope>TISSUE SPECIFICITY</scope>
</reference>
<reference key="2">
    <citation type="submission" date="2005-07" db="EMBL/GenBank/DDBJ databases">
        <authorList>
            <person name="Mural R.J."/>
            <person name="Istrail S."/>
            <person name="Sutton G.G."/>
            <person name="Florea L."/>
            <person name="Halpern A.L."/>
            <person name="Mobarry C.M."/>
            <person name="Lippert R."/>
            <person name="Walenz B."/>
            <person name="Shatkay H."/>
            <person name="Dew I."/>
            <person name="Miller J.R."/>
            <person name="Flanigan M.J."/>
            <person name="Edwards N.J."/>
            <person name="Bolanos R."/>
            <person name="Fasulo D."/>
            <person name="Halldorsson B.V."/>
            <person name="Hannenhalli S."/>
            <person name="Turner R."/>
            <person name="Yooseph S."/>
            <person name="Lu F."/>
            <person name="Nusskern D.R."/>
            <person name="Shue B.C."/>
            <person name="Zheng X.H."/>
            <person name="Zhong F."/>
            <person name="Delcher A.L."/>
            <person name="Huson D.H."/>
            <person name="Kravitz S.A."/>
            <person name="Mouchard L."/>
            <person name="Reinert K."/>
            <person name="Remington K.A."/>
            <person name="Clark A.G."/>
            <person name="Waterman M.S."/>
            <person name="Eichler E.E."/>
            <person name="Adams M.D."/>
            <person name="Hunkapiller M.W."/>
            <person name="Myers E.W."/>
            <person name="Venter J.C."/>
        </authorList>
    </citation>
    <scope>NUCLEOTIDE SEQUENCE [LARGE SCALE GENOMIC DNA]</scope>
</reference>
<reference key="3">
    <citation type="journal article" date="2007" name="Int. J. Oncol.">
        <title>Cellular expression, localization and interactions of the product of the human MOST-1 gene associated with breast and prostate cancers.</title>
        <authorList>
            <person name="Tan J.M.M."/>
            <person name="Chow V.T.K."/>
        </authorList>
    </citation>
    <scope>SUBCELLULAR LOCATION</scope>
    <scope>INTERACTION WITH TSPO; IGHM AND IGHD</scope>
</reference>
<feature type="chain" id="PRO_0000331456" description="Protein MOST-1">
    <location>
        <begin position="1"/>
        <end position="99"/>
    </location>
</feature>
<feature type="sequence variant" id="VAR_042878" description="In dbSNP:rs2233233.">
    <original>T</original>
    <variation>M</variation>
    <location>
        <position position="19"/>
    </location>
</feature>
<feature type="sequence variant" id="VAR_042879" description="In dbSNP:rs2233235.">
    <original>K</original>
    <variation>R</variation>
    <location>
        <position position="49"/>
    </location>
</feature>
<feature type="sequence variant" id="VAR_042880" description="In dbSNP:rs2233236.">
    <original>T</original>
    <variation>I</variation>
    <location>
        <position position="57"/>
    </location>
</feature>
<keyword id="KW-0963">Cytoplasm</keyword>
<keyword id="KW-0256">Endoplasmic reticulum</keyword>
<keyword id="KW-0472">Membrane</keyword>
<keyword id="KW-0492">Microsome</keyword>
<keyword id="KW-1185">Reference proteome</keyword>
<protein>
    <recommendedName>
        <fullName>Protein MOST-1</fullName>
    </recommendedName>
</protein>
<dbReference type="EMBL" id="AF220264">
    <property type="protein sequence ID" value="AAF87328.1"/>
    <property type="molecule type" value="mRNA"/>
</dbReference>
<dbReference type="EMBL" id="CH471060">
    <property type="protein sequence ID" value="EAW92204.1"/>
    <property type="molecule type" value="Genomic_DNA"/>
</dbReference>
<dbReference type="FunCoup" id="Q9NRJ1">
    <property type="interactions" value="38"/>
</dbReference>
<dbReference type="IntAct" id="Q9NRJ1">
    <property type="interactions" value="1"/>
</dbReference>
<dbReference type="BioMuta" id="HGNC:17737"/>
<dbReference type="MassIVE" id="Q9NRJ1"/>
<dbReference type="PeptideAtlas" id="Q9NRJ1"/>
<dbReference type="AGR" id="HGNC:17737"/>
<dbReference type="GeneCards" id="C8orf17"/>
<dbReference type="HGNC" id="HGNC:17737">
    <property type="gene designation" value="C8orf17"/>
</dbReference>
<dbReference type="MIM" id="616992">
    <property type="type" value="gene"/>
</dbReference>
<dbReference type="neXtProt" id="NX_Q9NRJ1"/>
<dbReference type="InParanoid" id="Q9NRJ1"/>
<dbReference type="PAN-GO" id="Q9NRJ1">
    <property type="GO annotations" value="0 GO annotations based on evolutionary models"/>
</dbReference>
<dbReference type="PhylomeDB" id="Q9NRJ1"/>
<dbReference type="TreeFam" id="TF351561"/>
<dbReference type="PathwayCommons" id="Q9NRJ1"/>
<dbReference type="Pharos" id="Q9NRJ1">
    <property type="development level" value="Tdark"/>
</dbReference>
<dbReference type="PRO" id="PR:Q9NRJ1"/>
<dbReference type="Proteomes" id="UP000005640">
    <property type="component" value="Unplaced"/>
</dbReference>
<dbReference type="RNAct" id="Q9NRJ1">
    <property type="molecule type" value="protein"/>
</dbReference>
<dbReference type="GO" id="GO:0005737">
    <property type="term" value="C:cytoplasm"/>
    <property type="evidence" value="ECO:0000314"/>
    <property type="project" value="UniProtKB"/>
</dbReference>
<dbReference type="GO" id="GO:0005789">
    <property type="term" value="C:endoplasmic reticulum membrane"/>
    <property type="evidence" value="ECO:0007669"/>
    <property type="project" value="UniProtKB-SubCell"/>
</dbReference>
<dbReference type="GO" id="GO:0005634">
    <property type="term" value="C:nucleus"/>
    <property type="evidence" value="ECO:0000314"/>
    <property type="project" value="UniProtKB"/>
</dbReference>
<dbReference type="GO" id="GO:0043066">
    <property type="term" value="P:negative regulation of apoptotic process"/>
    <property type="evidence" value="ECO:0000303"/>
    <property type="project" value="UniProtKB"/>
</dbReference>
<dbReference type="GO" id="GO:0008284">
    <property type="term" value="P:positive regulation of cell population proliferation"/>
    <property type="evidence" value="ECO:0000303"/>
    <property type="project" value="UniProtKB"/>
</dbReference>